<proteinExistence type="inferred from homology"/>
<sequence length="319" mass="34308">MKRIGVLTSGGDSPGMNAAIRAVVRKAIFHDIEVYGIYHGYAGLISGHIEKLELGSVGDIIHRGGTKLYTARCPEFKDPEVRLKGIEQLKKHGIEGLVVIGGDGSYQGAKKLTEQGFPCVGVPGTIDNDIPGTDFTIGFDTALNTVIDAIDKIRDTATSHERTYVIEVMGRHAGDIALWAGLADGAETILIPEEEYDMEDVIARLKRGSERGKKHSIIVVAEGVGSAIDIGKHIEEATNFDTRVTVLGHVQRGGSPSAQDRVLASRLGARAVELLIAGKGGRCVGIQDNKLVDHDIIEALAQKHTIDKDMYQLSKELSI</sequence>
<dbReference type="EC" id="2.7.1.11" evidence="1"/>
<dbReference type="EMBL" id="CP001283">
    <property type="protein sequence ID" value="ACK91996.1"/>
    <property type="molecule type" value="Genomic_DNA"/>
</dbReference>
<dbReference type="RefSeq" id="WP_000821163.1">
    <property type="nucleotide sequence ID" value="NC_011773.1"/>
</dbReference>
<dbReference type="SMR" id="B7JRX2"/>
<dbReference type="GeneID" id="93006511"/>
<dbReference type="KEGG" id="bcu:BCAH820_4714"/>
<dbReference type="HOGENOM" id="CLU_020655_0_1_9"/>
<dbReference type="UniPathway" id="UPA00109">
    <property type="reaction ID" value="UER00182"/>
</dbReference>
<dbReference type="Proteomes" id="UP000001363">
    <property type="component" value="Chromosome"/>
</dbReference>
<dbReference type="GO" id="GO:0005945">
    <property type="term" value="C:6-phosphofructokinase complex"/>
    <property type="evidence" value="ECO:0007669"/>
    <property type="project" value="TreeGrafter"/>
</dbReference>
<dbReference type="GO" id="GO:0003872">
    <property type="term" value="F:6-phosphofructokinase activity"/>
    <property type="evidence" value="ECO:0007669"/>
    <property type="project" value="UniProtKB-UniRule"/>
</dbReference>
<dbReference type="GO" id="GO:0016208">
    <property type="term" value="F:AMP binding"/>
    <property type="evidence" value="ECO:0007669"/>
    <property type="project" value="TreeGrafter"/>
</dbReference>
<dbReference type="GO" id="GO:0005524">
    <property type="term" value="F:ATP binding"/>
    <property type="evidence" value="ECO:0007669"/>
    <property type="project" value="UniProtKB-KW"/>
</dbReference>
<dbReference type="GO" id="GO:0070095">
    <property type="term" value="F:fructose-6-phosphate binding"/>
    <property type="evidence" value="ECO:0007669"/>
    <property type="project" value="TreeGrafter"/>
</dbReference>
<dbReference type="GO" id="GO:0042802">
    <property type="term" value="F:identical protein binding"/>
    <property type="evidence" value="ECO:0007669"/>
    <property type="project" value="TreeGrafter"/>
</dbReference>
<dbReference type="GO" id="GO:0046872">
    <property type="term" value="F:metal ion binding"/>
    <property type="evidence" value="ECO:0007669"/>
    <property type="project" value="UniProtKB-KW"/>
</dbReference>
<dbReference type="GO" id="GO:0048029">
    <property type="term" value="F:monosaccharide binding"/>
    <property type="evidence" value="ECO:0007669"/>
    <property type="project" value="TreeGrafter"/>
</dbReference>
<dbReference type="GO" id="GO:0061621">
    <property type="term" value="P:canonical glycolysis"/>
    <property type="evidence" value="ECO:0007669"/>
    <property type="project" value="TreeGrafter"/>
</dbReference>
<dbReference type="GO" id="GO:0030388">
    <property type="term" value="P:fructose 1,6-bisphosphate metabolic process"/>
    <property type="evidence" value="ECO:0007669"/>
    <property type="project" value="TreeGrafter"/>
</dbReference>
<dbReference type="GO" id="GO:0006002">
    <property type="term" value="P:fructose 6-phosphate metabolic process"/>
    <property type="evidence" value="ECO:0007669"/>
    <property type="project" value="InterPro"/>
</dbReference>
<dbReference type="CDD" id="cd00763">
    <property type="entry name" value="Bacterial_PFK"/>
    <property type="match status" value="1"/>
</dbReference>
<dbReference type="FunFam" id="3.40.50.450:FF:000001">
    <property type="entry name" value="ATP-dependent 6-phosphofructokinase"/>
    <property type="match status" value="1"/>
</dbReference>
<dbReference type="FunFam" id="3.40.50.460:FF:000002">
    <property type="entry name" value="ATP-dependent 6-phosphofructokinase"/>
    <property type="match status" value="1"/>
</dbReference>
<dbReference type="Gene3D" id="3.40.50.450">
    <property type="match status" value="1"/>
</dbReference>
<dbReference type="Gene3D" id="3.40.50.460">
    <property type="entry name" value="Phosphofructokinase domain"/>
    <property type="match status" value="1"/>
</dbReference>
<dbReference type="HAMAP" id="MF_00339">
    <property type="entry name" value="Phosphofructokinase_I_B1"/>
    <property type="match status" value="1"/>
</dbReference>
<dbReference type="InterPro" id="IPR022953">
    <property type="entry name" value="ATP_PFK"/>
</dbReference>
<dbReference type="InterPro" id="IPR012003">
    <property type="entry name" value="ATP_PFK_prok-type"/>
</dbReference>
<dbReference type="InterPro" id="IPR012828">
    <property type="entry name" value="PFKA_ATP_prok"/>
</dbReference>
<dbReference type="InterPro" id="IPR015912">
    <property type="entry name" value="Phosphofructokinase_CS"/>
</dbReference>
<dbReference type="InterPro" id="IPR000023">
    <property type="entry name" value="Phosphofructokinase_dom"/>
</dbReference>
<dbReference type="InterPro" id="IPR035966">
    <property type="entry name" value="PKF_sf"/>
</dbReference>
<dbReference type="NCBIfam" id="TIGR02482">
    <property type="entry name" value="PFKA_ATP"/>
    <property type="match status" value="1"/>
</dbReference>
<dbReference type="NCBIfam" id="NF002872">
    <property type="entry name" value="PRK03202.1"/>
    <property type="match status" value="1"/>
</dbReference>
<dbReference type="PANTHER" id="PTHR13697:SF4">
    <property type="entry name" value="ATP-DEPENDENT 6-PHOSPHOFRUCTOKINASE"/>
    <property type="match status" value="1"/>
</dbReference>
<dbReference type="PANTHER" id="PTHR13697">
    <property type="entry name" value="PHOSPHOFRUCTOKINASE"/>
    <property type="match status" value="1"/>
</dbReference>
<dbReference type="Pfam" id="PF00365">
    <property type="entry name" value="PFK"/>
    <property type="match status" value="1"/>
</dbReference>
<dbReference type="PIRSF" id="PIRSF000532">
    <property type="entry name" value="ATP_PFK_prok"/>
    <property type="match status" value="1"/>
</dbReference>
<dbReference type="PRINTS" id="PR00476">
    <property type="entry name" value="PHFRCTKINASE"/>
</dbReference>
<dbReference type="SUPFAM" id="SSF53784">
    <property type="entry name" value="Phosphofructokinase"/>
    <property type="match status" value="1"/>
</dbReference>
<dbReference type="PROSITE" id="PS00433">
    <property type="entry name" value="PHOSPHOFRUCTOKINASE"/>
    <property type="match status" value="1"/>
</dbReference>
<comment type="function">
    <text evidence="1">Catalyzes the phosphorylation of D-fructose 6-phosphate to fructose 1,6-bisphosphate by ATP, the first committing step of glycolysis.</text>
</comment>
<comment type="catalytic activity">
    <reaction evidence="1">
        <text>beta-D-fructose 6-phosphate + ATP = beta-D-fructose 1,6-bisphosphate + ADP + H(+)</text>
        <dbReference type="Rhea" id="RHEA:16109"/>
        <dbReference type="ChEBI" id="CHEBI:15378"/>
        <dbReference type="ChEBI" id="CHEBI:30616"/>
        <dbReference type="ChEBI" id="CHEBI:32966"/>
        <dbReference type="ChEBI" id="CHEBI:57634"/>
        <dbReference type="ChEBI" id="CHEBI:456216"/>
        <dbReference type="EC" id="2.7.1.11"/>
    </reaction>
</comment>
<comment type="cofactor">
    <cofactor evidence="1">
        <name>Mg(2+)</name>
        <dbReference type="ChEBI" id="CHEBI:18420"/>
    </cofactor>
</comment>
<comment type="activity regulation">
    <text evidence="1">Allosterically activated by ADP and other diphosphonucleosides, and allosterically inhibited by phosphoenolpyruvate.</text>
</comment>
<comment type="pathway">
    <text evidence="1">Carbohydrate degradation; glycolysis; D-glyceraldehyde 3-phosphate and glycerone phosphate from D-glucose: step 3/4.</text>
</comment>
<comment type="subunit">
    <text evidence="1">Homotetramer.</text>
</comment>
<comment type="subcellular location">
    <subcellularLocation>
        <location evidence="1">Cytoplasm</location>
    </subcellularLocation>
</comment>
<comment type="similarity">
    <text evidence="1">Belongs to the phosphofructokinase type A (PFKA) family. ATP-dependent PFK group I subfamily. Prokaryotic clade 'B1' sub-subfamily.</text>
</comment>
<accession>B7JRX2</accession>
<keyword id="KW-0021">Allosteric enzyme</keyword>
<keyword id="KW-0067">ATP-binding</keyword>
<keyword id="KW-0963">Cytoplasm</keyword>
<keyword id="KW-0324">Glycolysis</keyword>
<keyword id="KW-0418">Kinase</keyword>
<keyword id="KW-0460">Magnesium</keyword>
<keyword id="KW-0479">Metal-binding</keyword>
<keyword id="KW-0547">Nucleotide-binding</keyword>
<keyword id="KW-0808">Transferase</keyword>
<gene>
    <name evidence="1" type="primary">pfkA</name>
    <name type="ordered locus">BCAH820_4714</name>
</gene>
<protein>
    <recommendedName>
        <fullName evidence="1">ATP-dependent 6-phosphofructokinase</fullName>
        <shortName evidence="1">ATP-PFK</shortName>
        <shortName evidence="1">Phosphofructokinase</shortName>
        <ecNumber evidence="1">2.7.1.11</ecNumber>
    </recommendedName>
    <alternativeName>
        <fullName evidence="1">Phosphohexokinase</fullName>
    </alternativeName>
</protein>
<name>PFKA_BACC0</name>
<organism>
    <name type="scientific">Bacillus cereus (strain AH820)</name>
    <dbReference type="NCBI Taxonomy" id="405535"/>
    <lineage>
        <taxon>Bacteria</taxon>
        <taxon>Bacillati</taxon>
        <taxon>Bacillota</taxon>
        <taxon>Bacilli</taxon>
        <taxon>Bacillales</taxon>
        <taxon>Bacillaceae</taxon>
        <taxon>Bacillus</taxon>
        <taxon>Bacillus cereus group</taxon>
    </lineage>
</organism>
<evidence type="ECO:0000255" key="1">
    <source>
        <dbReference type="HAMAP-Rule" id="MF_00339"/>
    </source>
</evidence>
<reference key="1">
    <citation type="submission" date="2008-10" db="EMBL/GenBank/DDBJ databases">
        <title>Genome sequence of Bacillus cereus AH820.</title>
        <authorList>
            <person name="Dodson R.J."/>
            <person name="Durkin A.S."/>
            <person name="Rosovitz M.J."/>
            <person name="Rasko D.A."/>
            <person name="Hoffmaster A."/>
            <person name="Ravel J."/>
            <person name="Sutton G."/>
        </authorList>
    </citation>
    <scope>NUCLEOTIDE SEQUENCE [LARGE SCALE GENOMIC DNA]</scope>
    <source>
        <strain>AH820</strain>
    </source>
</reference>
<feature type="chain" id="PRO_1000120027" description="ATP-dependent 6-phosphofructokinase">
    <location>
        <begin position="1"/>
        <end position="319"/>
    </location>
</feature>
<feature type="active site" description="Proton acceptor" evidence="1">
    <location>
        <position position="127"/>
    </location>
</feature>
<feature type="binding site" evidence="1">
    <location>
        <position position="11"/>
    </location>
    <ligand>
        <name>ATP</name>
        <dbReference type="ChEBI" id="CHEBI:30616"/>
    </ligand>
</feature>
<feature type="binding site" evidence="1">
    <location>
        <begin position="21"/>
        <end position="25"/>
    </location>
    <ligand>
        <name>ADP</name>
        <dbReference type="ChEBI" id="CHEBI:456216"/>
        <note>allosteric activator; ligand shared between dimeric partners</note>
    </ligand>
</feature>
<feature type="binding site" evidence="1">
    <location>
        <begin position="72"/>
        <end position="73"/>
    </location>
    <ligand>
        <name>ATP</name>
        <dbReference type="ChEBI" id="CHEBI:30616"/>
    </ligand>
</feature>
<feature type="binding site" evidence="1">
    <location>
        <begin position="102"/>
        <end position="105"/>
    </location>
    <ligand>
        <name>ATP</name>
        <dbReference type="ChEBI" id="CHEBI:30616"/>
    </ligand>
</feature>
<feature type="binding site" evidence="1">
    <location>
        <position position="103"/>
    </location>
    <ligand>
        <name>Mg(2+)</name>
        <dbReference type="ChEBI" id="CHEBI:18420"/>
        <note>catalytic</note>
    </ligand>
</feature>
<feature type="binding site" description="in other chain" evidence="1">
    <location>
        <begin position="125"/>
        <end position="127"/>
    </location>
    <ligand>
        <name>substrate</name>
        <note>ligand shared between dimeric partners</note>
    </ligand>
</feature>
<feature type="binding site" description="in other chain" evidence="1">
    <location>
        <position position="154"/>
    </location>
    <ligand>
        <name>ADP</name>
        <dbReference type="ChEBI" id="CHEBI:456216"/>
        <note>allosteric activator; ligand shared between dimeric partners</note>
    </ligand>
</feature>
<feature type="binding site" evidence="1">
    <location>
        <position position="162"/>
    </location>
    <ligand>
        <name>substrate</name>
        <note>ligand shared between dimeric partners</note>
    </ligand>
</feature>
<feature type="binding site" description="in other chain" evidence="1">
    <location>
        <begin position="169"/>
        <end position="171"/>
    </location>
    <ligand>
        <name>substrate</name>
        <note>ligand shared between dimeric partners</note>
    </ligand>
</feature>
<feature type="binding site" description="in other chain" evidence="1">
    <location>
        <begin position="185"/>
        <end position="187"/>
    </location>
    <ligand>
        <name>ADP</name>
        <dbReference type="ChEBI" id="CHEBI:456216"/>
        <note>allosteric activator; ligand shared between dimeric partners</note>
    </ligand>
</feature>
<feature type="binding site" description="in other chain" evidence="1">
    <location>
        <position position="211"/>
    </location>
    <ligand>
        <name>ADP</name>
        <dbReference type="ChEBI" id="CHEBI:456216"/>
        <note>allosteric activator; ligand shared between dimeric partners</note>
    </ligand>
</feature>
<feature type="binding site" description="in other chain" evidence="1">
    <location>
        <begin position="213"/>
        <end position="215"/>
    </location>
    <ligand>
        <name>ADP</name>
        <dbReference type="ChEBI" id="CHEBI:456216"/>
        <note>allosteric activator; ligand shared between dimeric partners</note>
    </ligand>
</feature>
<feature type="binding site" description="in other chain" evidence="1">
    <location>
        <position position="222"/>
    </location>
    <ligand>
        <name>substrate</name>
        <note>ligand shared between dimeric partners</note>
    </ligand>
</feature>
<feature type="binding site" evidence="1">
    <location>
        <position position="243"/>
    </location>
    <ligand>
        <name>substrate</name>
        <note>ligand shared between dimeric partners</note>
    </ligand>
</feature>
<feature type="binding site" description="in other chain" evidence="1">
    <location>
        <begin position="249"/>
        <end position="252"/>
    </location>
    <ligand>
        <name>substrate</name>
        <note>ligand shared between dimeric partners</note>
    </ligand>
</feature>